<proteinExistence type="inferred from homology"/>
<evidence type="ECO:0000255" key="1">
    <source>
        <dbReference type="HAMAP-Rule" id="MF_00114"/>
    </source>
</evidence>
<evidence type="ECO:0000305" key="2"/>
<sequence>MTKQIARMIDHTALKPDTVKSEIEALCKEARVYGFASVCVNPCWVKLCAELLKESEVKVCTVIGFPLGAASPETKAFETRQAIADGAGEVDMVINIGALKDRDTGTVEHDIRAVTDAADGKALVKVIIETSLLTDEEKRLACELAVKAGADFVKTSTGFSGGGATVRDIKLMREAVGPDIGVKASGGVRDKESALAMIEAGATRIGASAGVSIVKGLTADEDY</sequence>
<dbReference type="EC" id="4.1.2.4" evidence="1"/>
<dbReference type="EMBL" id="AE017333">
    <property type="protein sequence ID" value="AAU41605.1"/>
    <property type="status" value="ALT_INIT"/>
    <property type="molecule type" value="Genomic_DNA"/>
</dbReference>
<dbReference type="EMBL" id="CP000002">
    <property type="protein sequence ID" value="AAU24243.1"/>
    <property type="molecule type" value="Genomic_DNA"/>
</dbReference>
<dbReference type="SMR" id="Q65H59"/>
<dbReference type="STRING" id="279010.BL02102"/>
<dbReference type="KEGG" id="bld:BLi02734"/>
<dbReference type="KEGG" id="bli:BL02102"/>
<dbReference type="PATRIC" id="fig|279010.13.peg.2778"/>
<dbReference type="eggNOG" id="COG0274">
    <property type="taxonomic scope" value="Bacteria"/>
</dbReference>
<dbReference type="HOGENOM" id="CLU_053595_0_1_9"/>
<dbReference type="UniPathway" id="UPA00002">
    <property type="reaction ID" value="UER00468"/>
</dbReference>
<dbReference type="Proteomes" id="UP000000606">
    <property type="component" value="Chromosome"/>
</dbReference>
<dbReference type="GO" id="GO:0005737">
    <property type="term" value="C:cytoplasm"/>
    <property type="evidence" value="ECO:0007669"/>
    <property type="project" value="UniProtKB-SubCell"/>
</dbReference>
<dbReference type="GO" id="GO:0004139">
    <property type="term" value="F:deoxyribose-phosphate aldolase activity"/>
    <property type="evidence" value="ECO:0007669"/>
    <property type="project" value="UniProtKB-UniRule"/>
</dbReference>
<dbReference type="GO" id="GO:0006018">
    <property type="term" value="P:2-deoxyribose 1-phosphate catabolic process"/>
    <property type="evidence" value="ECO:0007669"/>
    <property type="project" value="UniProtKB-UniRule"/>
</dbReference>
<dbReference type="GO" id="GO:0016052">
    <property type="term" value="P:carbohydrate catabolic process"/>
    <property type="evidence" value="ECO:0007669"/>
    <property type="project" value="TreeGrafter"/>
</dbReference>
<dbReference type="GO" id="GO:0009264">
    <property type="term" value="P:deoxyribonucleotide catabolic process"/>
    <property type="evidence" value="ECO:0007669"/>
    <property type="project" value="InterPro"/>
</dbReference>
<dbReference type="CDD" id="cd00959">
    <property type="entry name" value="DeoC"/>
    <property type="match status" value="1"/>
</dbReference>
<dbReference type="FunFam" id="3.20.20.70:FF:000044">
    <property type="entry name" value="Deoxyribose-phosphate aldolase"/>
    <property type="match status" value="1"/>
</dbReference>
<dbReference type="Gene3D" id="3.20.20.70">
    <property type="entry name" value="Aldolase class I"/>
    <property type="match status" value="1"/>
</dbReference>
<dbReference type="HAMAP" id="MF_00114">
    <property type="entry name" value="DeoC_type1"/>
    <property type="match status" value="1"/>
</dbReference>
<dbReference type="InterPro" id="IPR013785">
    <property type="entry name" value="Aldolase_TIM"/>
</dbReference>
<dbReference type="InterPro" id="IPR011343">
    <property type="entry name" value="DeoC"/>
</dbReference>
<dbReference type="InterPro" id="IPR002915">
    <property type="entry name" value="DeoC/FbaB/LacD_aldolase"/>
</dbReference>
<dbReference type="InterPro" id="IPR028581">
    <property type="entry name" value="DeoC_typeI"/>
</dbReference>
<dbReference type="NCBIfam" id="TIGR00126">
    <property type="entry name" value="deoC"/>
    <property type="match status" value="1"/>
</dbReference>
<dbReference type="PANTHER" id="PTHR10889">
    <property type="entry name" value="DEOXYRIBOSE-PHOSPHATE ALDOLASE"/>
    <property type="match status" value="1"/>
</dbReference>
<dbReference type="PANTHER" id="PTHR10889:SF1">
    <property type="entry name" value="DEOXYRIBOSE-PHOSPHATE ALDOLASE"/>
    <property type="match status" value="1"/>
</dbReference>
<dbReference type="Pfam" id="PF01791">
    <property type="entry name" value="DeoC"/>
    <property type="match status" value="1"/>
</dbReference>
<dbReference type="PIRSF" id="PIRSF001357">
    <property type="entry name" value="DeoC"/>
    <property type="match status" value="1"/>
</dbReference>
<dbReference type="SMART" id="SM01133">
    <property type="entry name" value="DeoC"/>
    <property type="match status" value="1"/>
</dbReference>
<dbReference type="SUPFAM" id="SSF51569">
    <property type="entry name" value="Aldolase"/>
    <property type="match status" value="1"/>
</dbReference>
<organism>
    <name type="scientific">Bacillus licheniformis (strain ATCC 14580 / DSM 13 / JCM 2505 / CCUG 7422 / NBRC 12200 / NCIMB 9375 / NCTC 10341 / NRRL NRS-1264 / Gibson 46)</name>
    <dbReference type="NCBI Taxonomy" id="279010"/>
    <lineage>
        <taxon>Bacteria</taxon>
        <taxon>Bacillati</taxon>
        <taxon>Bacillota</taxon>
        <taxon>Bacilli</taxon>
        <taxon>Bacillales</taxon>
        <taxon>Bacillaceae</taxon>
        <taxon>Bacillus</taxon>
    </lineage>
</organism>
<reference key="1">
    <citation type="journal article" date="2004" name="J. Mol. Microbiol. Biotechnol.">
        <title>The complete genome sequence of Bacillus licheniformis DSM13, an organism with great industrial potential.</title>
        <authorList>
            <person name="Veith B."/>
            <person name="Herzberg C."/>
            <person name="Steckel S."/>
            <person name="Feesche J."/>
            <person name="Maurer K.H."/>
            <person name="Ehrenreich P."/>
            <person name="Baeumer S."/>
            <person name="Henne A."/>
            <person name="Liesegang H."/>
            <person name="Merkl R."/>
            <person name="Ehrenreich A."/>
            <person name="Gottschalk G."/>
        </authorList>
    </citation>
    <scope>NUCLEOTIDE SEQUENCE [LARGE SCALE GENOMIC DNA]</scope>
    <source>
        <strain>ATCC 14580 / DSM 13 / JCM 2505 / CCUG 7422 / NBRC 12200 / NCIMB 9375 / NCTC 10341 / NRRL NRS-1264 / Gibson 46</strain>
    </source>
</reference>
<reference key="2">
    <citation type="journal article" date="2004" name="Genome Biol.">
        <title>Complete genome sequence of the industrial bacterium Bacillus licheniformis and comparisons with closely related Bacillus species.</title>
        <authorList>
            <person name="Rey M.W."/>
            <person name="Ramaiya P."/>
            <person name="Nelson B.A."/>
            <person name="Brody-Karpin S.D."/>
            <person name="Zaretsky E.J."/>
            <person name="Tang M."/>
            <person name="Lopez de Leon A."/>
            <person name="Xiang H."/>
            <person name="Gusti V."/>
            <person name="Clausen I.G."/>
            <person name="Olsen P.B."/>
            <person name="Rasmussen M.D."/>
            <person name="Andersen J.T."/>
            <person name="Joergensen P.L."/>
            <person name="Larsen T.S."/>
            <person name="Sorokin A."/>
            <person name="Bolotin A."/>
            <person name="Lapidus A."/>
            <person name="Galleron N."/>
            <person name="Ehrlich S.D."/>
            <person name="Berka R.M."/>
        </authorList>
    </citation>
    <scope>NUCLEOTIDE SEQUENCE [LARGE SCALE GENOMIC DNA]</scope>
    <source>
        <strain>ATCC 14580 / DSM 13 / JCM 2505 / CCUG 7422 / NBRC 12200 / NCIMB 9375 / NCTC 10341 / NRRL NRS-1264 / Gibson 46</strain>
    </source>
</reference>
<keyword id="KW-0963">Cytoplasm</keyword>
<keyword id="KW-0456">Lyase</keyword>
<keyword id="KW-1185">Reference proteome</keyword>
<keyword id="KW-0704">Schiff base</keyword>
<accession>Q65H59</accession>
<accession>Q62SL6</accession>
<comment type="function">
    <text evidence="1">Catalyzes a reversible aldol reaction between acetaldehyde and D-glyceraldehyde 3-phosphate to generate 2-deoxy-D-ribose 5-phosphate.</text>
</comment>
<comment type="catalytic activity">
    <reaction evidence="1">
        <text>2-deoxy-D-ribose 5-phosphate = D-glyceraldehyde 3-phosphate + acetaldehyde</text>
        <dbReference type="Rhea" id="RHEA:12821"/>
        <dbReference type="ChEBI" id="CHEBI:15343"/>
        <dbReference type="ChEBI" id="CHEBI:59776"/>
        <dbReference type="ChEBI" id="CHEBI:62877"/>
        <dbReference type="EC" id="4.1.2.4"/>
    </reaction>
</comment>
<comment type="pathway">
    <text evidence="1">Carbohydrate degradation; 2-deoxy-D-ribose 1-phosphate degradation; D-glyceraldehyde 3-phosphate and acetaldehyde from 2-deoxy-alpha-D-ribose 1-phosphate: step 2/2.</text>
</comment>
<comment type="subcellular location">
    <subcellularLocation>
        <location evidence="1">Cytoplasm</location>
    </subcellularLocation>
</comment>
<comment type="similarity">
    <text evidence="1">Belongs to the DeoC/FbaB aldolase family. DeoC type 1 subfamily.</text>
</comment>
<comment type="sequence caution" evidence="2">
    <conflict type="erroneous initiation">
        <sequence resource="EMBL-CDS" id="AAU41605"/>
    </conflict>
</comment>
<protein>
    <recommendedName>
        <fullName evidence="1">Deoxyribose-phosphate aldolase 1</fullName>
        <shortName evidence="1">DERA 1</shortName>
        <ecNumber evidence="1">4.1.2.4</ecNumber>
    </recommendedName>
    <alternativeName>
        <fullName evidence="1">2-deoxy-D-ribose 5-phosphate aldolase 1</fullName>
    </alternativeName>
    <alternativeName>
        <fullName evidence="1">Phosphodeoxyriboaldolase 1</fullName>
        <shortName evidence="1">Deoxyriboaldolase 1</shortName>
    </alternativeName>
</protein>
<gene>
    <name evidence="1" type="primary">deoC1</name>
    <name type="ordered locus">BLi02734</name>
    <name type="ordered locus">BL02102</name>
</gene>
<feature type="chain" id="PRO_0000231531" description="Deoxyribose-phosphate aldolase 1">
    <location>
        <begin position="1"/>
        <end position="223"/>
    </location>
</feature>
<feature type="active site" description="Proton donor/acceptor" evidence="1">
    <location>
        <position position="91"/>
    </location>
</feature>
<feature type="active site" description="Schiff-base intermediate with acetaldehyde" evidence="1">
    <location>
        <position position="154"/>
    </location>
</feature>
<feature type="active site" description="Proton donor/acceptor" evidence="1">
    <location>
        <position position="183"/>
    </location>
</feature>
<name>DEOC1_BACLD</name>